<sequence>MYTSGYANRSSSFPTTTHNAARTATENAAAGLVSEVVYHEDQPMMAQLLLLPLLRQLGQQSRWQLWLTPQQKLSREWVQSSGLPLTKVMQISQLAPRHTLESMIRALRTGNYSVVIGWMTEELTEEEHASLVEAAKVGNAVGFIMRPVRAHALPRRQHSGLKIHSNLYH</sequence>
<reference key="1">
    <citation type="journal article" date="2004" name="Nat. Genet.">
        <title>Comparison of genome degradation in Paratyphi A and Typhi, human-restricted serovars of Salmonella enterica that cause typhoid.</title>
        <authorList>
            <person name="McClelland M."/>
            <person name="Sanderson K.E."/>
            <person name="Clifton S.W."/>
            <person name="Latreille P."/>
            <person name="Porwollik S."/>
            <person name="Sabo A."/>
            <person name="Meyer R."/>
            <person name="Bieri T."/>
            <person name="Ozersky P."/>
            <person name="McLellan M."/>
            <person name="Harkins C.R."/>
            <person name="Wang C."/>
            <person name="Nguyen C."/>
            <person name="Berghoff A."/>
            <person name="Elliott G."/>
            <person name="Kohlberg S."/>
            <person name="Strong C."/>
            <person name="Du F."/>
            <person name="Carter J."/>
            <person name="Kremizki C."/>
            <person name="Layman D."/>
            <person name="Leonard S."/>
            <person name="Sun H."/>
            <person name="Fulton L."/>
            <person name="Nash W."/>
            <person name="Miner T."/>
            <person name="Minx P."/>
            <person name="Delehaunty K."/>
            <person name="Fronick C."/>
            <person name="Magrini V."/>
            <person name="Nhan M."/>
            <person name="Warren W."/>
            <person name="Florea L."/>
            <person name="Spieth J."/>
            <person name="Wilson R.K."/>
        </authorList>
    </citation>
    <scope>NUCLEOTIDE SEQUENCE [LARGE SCALE GENOMIC DNA]</scope>
    <source>
        <strain>ATCC 9150 / SARB42</strain>
    </source>
</reference>
<organism>
    <name type="scientific">Salmonella paratyphi A (strain ATCC 9150 / SARB42)</name>
    <dbReference type="NCBI Taxonomy" id="295319"/>
    <lineage>
        <taxon>Bacteria</taxon>
        <taxon>Pseudomonadati</taxon>
        <taxon>Pseudomonadota</taxon>
        <taxon>Gammaproteobacteria</taxon>
        <taxon>Enterobacterales</taxon>
        <taxon>Enterobacteriaceae</taxon>
        <taxon>Salmonella</taxon>
    </lineage>
</organism>
<keyword id="KW-0131">Cell cycle</keyword>
<keyword id="KW-0132">Cell division</keyword>
<keyword id="KW-0227">DNA damage</keyword>
<keyword id="KW-0717">Septation</keyword>
<keyword id="KW-0742">SOS response</keyword>
<dbReference type="EMBL" id="CP000026">
    <property type="protein sequence ID" value="AAV77695.1"/>
    <property type="molecule type" value="Genomic_DNA"/>
</dbReference>
<dbReference type="RefSeq" id="WP_000288732.1">
    <property type="nucleotide sequence ID" value="NC_006511.1"/>
</dbReference>
<dbReference type="SMR" id="Q5PGD6"/>
<dbReference type="KEGG" id="spt:SPA1779"/>
<dbReference type="HOGENOM" id="CLU_118972_1_0_6"/>
<dbReference type="Proteomes" id="UP000008185">
    <property type="component" value="Chromosome"/>
</dbReference>
<dbReference type="GO" id="GO:0000917">
    <property type="term" value="P:division septum assembly"/>
    <property type="evidence" value="ECO:0007669"/>
    <property type="project" value="UniProtKB-KW"/>
</dbReference>
<dbReference type="GO" id="GO:0006281">
    <property type="term" value="P:DNA repair"/>
    <property type="evidence" value="ECO:0007669"/>
    <property type="project" value="TreeGrafter"/>
</dbReference>
<dbReference type="GO" id="GO:0051782">
    <property type="term" value="P:negative regulation of cell division"/>
    <property type="evidence" value="ECO:0007669"/>
    <property type="project" value="UniProtKB-UniRule"/>
</dbReference>
<dbReference type="GO" id="GO:0009432">
    <property type="term" value="P:SOS response"/>
    <property type="evidence" value="ECO:0007669"/>
    <property type="project" value="UniProtKB-UniRule"/>
</dbReference>
<dbReference type="FunFam" id="3.40.50.300:FF:000417">
    <property type="entry name" value="Cell division inhibitor SulA"/>
    <property type="match status" value="1"/>
</dbReference>
<dbReference type="Gene3D" id="3.40.50.300">
    <property type="entry name" value="P-loop containing nucleotide triphosphate hydrolases"/>
    <property type="match status" value="1"/>
</dbReference>
<dbReference type="HAMAP" id="MF_01179">
    <property type="entry name" value="SulA"/>
    <property type="match status" value="1"/>
</dbReference>
<dbReference type="InterPro" id="IPR004596">
    <property type="entry name" value="Cell_div_suppressor_SulA"/>
</dbReference>
<dbReference type="InterPro" id="IPR027417">
    <property type="entry name" value="P-loop_NTPase"/>
</dbReference>
<dbReference type="InterPro" id="IPR050356">
    <property type="entry name" value="SulA_CellDiv_inhibitor"/>
</dbReference>
<dbReference type="InterPro" id="IPR047696">
    <property type="entry name" value="SulA_enterobact"/>
</dbReference>
<dbReference type="NCBIfam" id="NF007892">
    <property type="entry name" value="PRK10595.1"/>
    <property type="match status" value="1"/>
</dbReference>
<dbReference type="NCBIfam" id="TIGR00623">
    <property type="entry name" value="SOS_SulA_coli"/>
    <property type="match status" value="1"/>
</dbReference>
<dbReference type="PANTHER" id="PTHR35369">
    <property type="entry name" value="BLR3025 PROTEIN-RELATED"/>
    <property type="match status" value="1"/>
</dbReference>
<dbReference type="PANTHER" id="PTHR35369:SF4">
    <property type="entry name" value="CELL DIVISION INHIBITOR SULA"/>
    <property type="match status" value="1"/>
</dbReference>
<dbReference type="Pfam" id="PF03846">
    <property type="entry name" value="SulA"/>
    <property type="match status" value="1"/>
</dbReference>
<dbReference type="PIRSF" id="PIRSF003093">
    <property type="entry name" value="SulA"/>
    <property type="match status" value="1"/>
</dbReference>
<dbReference type="SUPFAM" id="SSF52540">
    <property type="entry name" value="P-loop containing nucleoside triphosphate hydrolases"/>
    <property type="match status" value="1"/>
</dbReference>
<proteinExistence type="inferred from homology"/>
<protein>
    <recommendedName>
        <fullName evidence="1">Cell division inhibitor SulA</fullName>
    </recommendedName>
</protein>
<accession>Q5PGD6</accession>
<gene>
    <name evidence="1" type="primary">sulA</name>
    <name type="ordered locus">SPA1779</name>
</gene>
<evidence type="ECO:0000255" key="1">
    <source>
        <dbReference type="HAMAP-Rule" id="MF_01179"/>
    </source>
</evidence>
<feature type="chain" id="PRO_0000343972" description="Cell division inhibitor SulA">
    <location>
        <begin position="1"/>
        <end position="169"/>
    </location>
</feature>
<feature type="region of interest" description="FtsZ binding" evidence="1">
    <location>
        <begin position="106"/>
        <end position="112"/>
    </location>
</feature>
<feature type="region of interest" description="Lon protease binding" evidence="1">
    <location>
        <begin position="162"/>
        <end position="169"/>
    </location>
</feature>
<feature type="site" description="Essential for degradation by Lon protease" evidence="1">
    <location>
        <position position="169"/>
    </location>
</feature>
<comment type="function">
    <text evidence="1">Component of the SOS system and an inhibitor of cell division. Accumulation of SulA causes rapid cessation of cell division and the appearance of long, non-septate filaments. In the presence of GTP, binds a polymerization-competent form of FtsZ in a 1:1 ratio, thus inhibiting FtsZ polymerization and therefore preventing it from participating in the assembly of the Z ring. This mechanism prevents the premature segregation of damaged DNA to daughter cells during cell division.</text>
</comment>
<comment type="subunit">
    <text evidence="1">Interacts with FtsZ.</text>
</comment>
<comment type="induction">
    <text evidence="1">By DNA damage, as part of the SOS response.</text>
</comment>
<comment type="PTM">
    <text evidence="1">Is rapidly cleaved and degraded by the Lon protease once DNA damage is repaired.</text>
</comment>
<comment type="similarity">
    <text evidence="1">Belongs to the SulA family.</text>
</comment>
<name>SULA_SALPA</name>